<protein>
    <recommendedName>
        <fullName evidence="1">3-dehydroquinate dehydratase</fullName>
        <shortName evidence="1">3-dehydroquinase</shortName>
        <ecNumber evidence="1">4.2.1.10</ecNumber>
    </recommendedName>
    <alternativeName>
        <fullName evidence="1">Type I DHQase</fullName>
    </alternativeName>
    <alternativeName>
        <fullName evidence="1">Type I dehydroquinase</fullName>
        <shortName evidence="1">DHQ1</shortName>
    </alternativeName>
</protein>
<organism>
    <name type="scientific">Methanococcus maripaludis (strain C6 / ATCC BAA-1332)</name>
    <dbReference type="NCBI Taxonomy" id="444158"/>
    <lineage>
        <taxon>Archaea</taxon>
        <taxon>Methanobacteriati</taxon>
        <taxon>Methanobacteriota</taxon>
        <taxon>Methanomada group</taxon>
        <taxon>Methanococci</taxon>
        <taxon>Methanococcales</taxon>
        <taxon>Methanococcaceae</taxon>
        <taxon>Methanococcus</taxon>
    </lineage>
</organism>
<keyword id="KW-0028">Amino-acid biosynthesis</keyword>
<keyword id="KW-0057">Aromatic amino acid biosynthesis</keyword>
<keyword id="KW-0456">Lyase</keyword>
<keyword id="KW-0704">Schiff base</keyword>
<comment type="function">
    <text evidence="1">Involved in the third step of the chorismate pathway, which leads to the biosynthesis of aromatic amino acids. Catalyzes the cis-dehydration of 3-dehydroquinate (DHQ) and introduces the first double bond of the aromatic ring to yield 3-dehydroshikimate.</text>
</comment>
<comment type="catalytic activity">
    <reaction evidence="1">
        <text>3-dehydroquinate = 3-dehydroshikimate + H2O</text>
        <dbReference type="Rhea" id="RHEA:21096"/>
        <dbReference type="ChEBI" id="CHEBI:15377"/>
        <dbReference type="ChEBI" id="CHEBI:16630"/>
        <dbReference type="ChEBI" id="CHEBI:32364"/>
        <dbReference type="EC" id="4.2.1.10"/>
    </reaction>
</comment>
<comment type="pathway">
    <text evidence="1">Metabolic intermediate biosynthesis; chorismate biosynthesis; chorismate from D-erythrose 4-phosphate and phosphoenolpyruvate: step 3/7.</text>
</comment>
<comment type="subunit">
    <text evidence="1">Homodimer.</text>
</comment>
<comment type="similarity">
    <text evidence="1">Belongs to the type-I 3-dehydroquinase family.</text>
</comment>
<evidence type="ECO:0000255" key="1">
    <source>
        <dbReference type="HAMAP-Rule" id="MF_00214"/>
    </source>
</evidence>
<dbReference type="EC" id="4.2.1.10" evidence="1"/>
<dbReference type="EMBL" id="CP000867">
    <property type="protein sequence ID" value="ABX02092.1"/>
    <property type="molecule type" value="Genomic_DNA"/>
</dbReference>
<dbReference type="SMR" id="A9A9R9"/>
<dbReference type="STRING" id="444158.MmarC6_1279"/>
<dbReference type="KEGG" id="mmx:MmarC6_1279"/>
<dbReference type="eggNOG" id="arCOG02097">
    <property type="taxonomic scope" value="Archaea"/>
</dbReference>
<dbReference type="HOGENOM" id="CLU_064444_2_1_2"/>
<dbReference type="OrthoDB" id="34329at2157"/>
<dbReference type="PhylomeDB" id="A9A9R9"/>
<dbReference type="UniPathway" id="UPA00053">
    <property type="reaction ID" value="UER00086"/>
</dbReference>
<dbReference type="GO" id="GO:0003855">
    <property type="term" value="F:3-dehydroquinate dehydratase activity"/>
    <property type="evidence" value="ECO:0007669"/>
    <property type="project" value="UniProtKB-UniRule"/>
</dbReference>
<dbReference type="GO" id="GO:0046279">
    <property type="term" value="P:3,4-dihydroxybenzoate biosynthetic process"/>
    <property type="evidence" value="ECO:0007669"/>
    <property type="project" value="UniProtKB-ARBA"/>
</dbReference>
<dbReference type="GO" id="GO:0008652">
    <property type="term" value="P:amino acid biosynthetic process"/>
    <property type="evidence" value="ECO:0007669"/>
    <property type="project" value="UniProtKB-KW"/>
</dbReference>
<dbReference type="GO" id="GO:0009073">
    <property type="term" value="P:aromatic amino acid family biosynthetic process"/>
    <property type="evidence" value="ECO:0007669"/>
    <property type="project" value="UniProtKB-KW"/>
</dbReference>
<dbReference type="GO" id="GO:0009423">
    <property type="term" value="P:chorismate biosynthetic process"/>
    <property type="evidence" value="ECO:0007669"/>
    <property type="project" value="UniProtKB-UniRule"/>
</dbReference>
<dbReference type="CDD" id="cd00502">
    <property type="entry name" value="DHQase_I"/>
    <property type="match status" value="1"/>
</dbReference>
<dbReference type="FunFam" id="3.20.20.70:FF:000047">
    <property type="entry name" value="3-dehydroquinate dehydratase"/>
    <property type="match status" value="1"/>
</dbReference>
<dbReference type="Gene3D" id="3.20.20.70">
    <property type="entry name" value="Aldolase class I"/>
    <property type="match status" value="1"/>
</dbReference>
<dbReference type="HAMAP" id="MF_00214">
    <property type="entry name" value="AroD"/>
    <property type="match status" value="1"/>
</dbReference>
<dbReference type="InterPro" id="IPR018508">
    <property type="entry name" value="3-dehydroquinate_DH_AS"/>
</dbReference>
<dbReference type="InterPro" id="IPR013785">
    <property type="entry name" value="Aldolase_TIM"/>
</dbReference>
<dbReference type="InterPro" id="IPR001381">
    <property type="entry name" value="DHquinase_I"/>
</dbReference>
<dbReference type="InterPro" id="IPR050146">
    <property type="entry name" value="Type-I_3-dehydroquinase"/>
</dbReference>
<dbReference type="NCBIfam" id="TIGR01093">
    <property type="entry name" value="aroD"/>
    <property type="match status" value="1"/>
</dbReference>
<dbReference type="PANTHER" id="PTHR43699">
    <property type="entry name" value="3-DEHYDROQUINATE DEHYDRATASE"/>
    <property type="match status" value="1"/>
</dbReference>
<dbReference type="PANTHER" id="PTHR43699:SF1">
    <property type="entry name" value="3-DEHYDROQUINATE DEHYDRATASE"/>
    <property type="match status" value="1"/>
</dbReference>
<dbReference type="Pfam" id="PF01487">
    <property type="entry name" value="DHquinase_I"/>
    <property type="match status" value="1"/>
</dbReference>
<dbReference type="SUPFAM" id="SSF51569">
    <property type="entry name" value="Aldolase"/>
    <property type="match status" value="1"/>
</dbReference>
<dbReference type="PROSITE" id="PS01028">
    <property type="entry name" value="DEHYDROQUINASE_I"/>
    <property type="match status" value="1"/>
</dbReference>
<gene>
    <name evidence="1" type="primary">aroD</name>
    <name type="ordered locus">MmarC6_1279</name>
</gene>
<sequence length="218" mass="24628">MICIPVIDENVSDAINSAKEALKYGDIVEFRVDLLNDVTFEDIEKFSKIPSILTIRAEWEGGAWKKSDNERIELLKYAIKNNAKFIDIELKEERNLELVKYRNEIGSKTKIIVSYHDFEKTPEIDELIDVVEKELKIGDIAKFATFAHSKEDTLKILNLMNKYSGKIIAIGMGESGKLTRILGLDFGSILTFASMEGKASAPGQVDVKKLKEILELIE</sequence>
<name>AROD_METM6</name>
<accession>A9A9R9</accession>
<reference key="1">
    <citation type="submission" date="2007-10" db="EMBL/GenBank/DDBJ databases">
        <title>Complete sequence of Methanococcus maripaludis C6.</title>
        <authorList>
            <consortium name="US DOE Joint Genome Institute"/>
            <person name="Copeland A."/>
            <person name="Lucas S."/>
            <person name="Lapidus A."/>
            <person name="Barry K."/>
            <person name="Glavina del Rio T."/>
            <person name="Dalin E."/>
            <person name="Tice H."/>
            <person name="Pitluck S."/>
            <person name="Clum A."/>
            <person name="Schmutz J."/>
            <person name="Larimer F."/>
            <person name="Land M."/>
            <person name="Hauser L."/>
            <person name="Kyrpides N."/>
            <person name="Mikhailova N."/>
            <person name="Sieprawska-Lupa M."/>
            <person name="Whitman W.B."/>
            <person name="Richardson P."/>
        </authorList>
    </citation>
    <scope>NUCLEOTIDE SEQUENCE [LARGE SCALE GENOMIC DNA]</scope>
    <source>
        <strain>C6 / ATCC BAA-1332</strain>
    </source>
</reference>
<feature type="chain" id="PRO_1000099910" description="3-dehydroquinate dehydratase">
    <location>
        <begin position="1"/>
        <end position="218"/>
    </location>
</feature>
<feature type="active site" description="Proton donor/acceptor" evidence="1">
    <location>
        <position position="116"/>
    </location>
</feature>
<feature type="active site" description="Schiff-base intermediate with substrate" evidence="1">
    <location>
        <position position="142"/>
    </location>
</feature>
<feature type="binding site" evidence="1">
    <location>
        <begin position="29"/>
        <end position="31"/>
    </location>
    <ligand>
        <name>3-dehydroquinate</name>
        <dbReference type="ChEBI" id="CHEBI:32364"/>
    </ligand>
</feature>
<feature type="binding site" evidence="1">
    <location>
        <position position="56"/>
    </location>
    <ligand>
        <name>3-dehydroquinate</name>
        <dbReference type="ChEBI" id="CHEBI:32364"/>
    </ligand>
</feature>
<feature type="binding site" evidence="1">
    <location>
        <position position="180"/>
    </location>
    <ligand>
        <name>3-dehydroquinate</name>
        <dbReference type="ChEBI" id="CHEBI:32364"/>
    </ligand>
</feature>
<feature type="binding site" evidence="1">
    <location>
        <position position="200"/>
    </location>
    <ligand>
        <name>3-dehydroquinate</name>
        <dbReference type="ChEBI" id="CHEBI:32364"/>
    </ligand>
</feature>
<feature type="binding site" evidence="1">
    <location>
        <position position="204"/>
    </location>
    <ligand>
        <name>3-dehydroquinate</name>
        <dbReference type="ChEBI" id="CHEBI:32364"/>
    </ligand>
</feature>
<proteinExistence type="inferred from homology"/>